<gene>
    <name evidence="1" type="primary">murI</name>
    <name type="ordered locus">swp_0207</name>
</gene>
<accession>B8CH57</accession>
<reference key="1">
    <citation type="journal article" date="2008" name="PLoS ONE">
        <title>Environmental adaptation: genomic analysis of the piezotolerant and psychrotolerant deep-sea iron reducing bacterium Shewanella piezotolerans WP3.</title>
        <authorList>
            <person name="Wang F."/>
            <person name="Wang J."/>
            <person name="Jian H."/>
            <person name="Zhang B."/>
            <person name="Li S."/>
            <person name="Wang F."/>
            <person name="Zeng X."/>
            <person name="Gao L."/>
            <person name="Bartlett D.H."/>
            <person name="Yu J."/>
            <person name="Hu S."/>
            <person name="Xiao X."/>
        </authorList>
    </citation>
    <scope>NUCLEOTIDE SEQUENCE [LARGE SCALE GENOMIC DNA]</scope>
    <source>
        <strain>WP3 / JCM 13877</strain>
    </source>
</reference>
<protein>
    <recommendedName>
        <fullName evidence="1">Glutamate racemase</fullName>
        <ecNumber evidence="1">5.1.1.3</ecNumber>
    </recommendedName>
</protein>
<proteinExistence type="inferred from homology"/>
<dbReference type="EC" id="5.1.1.3" evidence="1"/>
<dbReference type="EMBL" id="CP000472">
    <property type="protein sequence ID" value="ACJ27050.1"/>
    <property type="molecule type" value="Genomic_DNA"/>
</dbReference>
<dbReference type="RefSeq" id="WP_020910434.1">
    <property type="nucleotide sequence ID" value="NC_011566.1"/>
</dbReference>
<dbReference type="SMR" id="B8CH57"/>
<dbReference type="STRING" id="225849.swp_0207"/>
<dbReference type="KEGG" id="swp:swp_0207"/>
<dbReference type="eggNOG" id="COG0796">
    <property type="taxonomic scope" value="Bacteria"/>
</dbReference>
<dbReference type="HOGENOM" id="CLU_052344_2_0_6"/>
<dbReference type="OrthoDB" id="9801055at2"/>
<dbReference type="UniPathway" id="UPA00219"/>
<dbReference type="Proteomes" id="UP000000753">
    <property type="component" value="Chromosome"/>
</dbReference>
<dbReference type="GO" id="GO:0008881">
    <property type="term" value="F:glutamate racemase activity"/>
    <property type="evidence" value="ECO:0007669"/>
    <property type="project" value="UniProtKB-UniRule"/>
</dbReference>
<dbReference type="GO" id="GO:0071555">
    <property type="term" value="P:cell wall organization"/>
    <property type="evidence" value="ECO:0007669"/>
    <property type="project" value="UniProtKB-KW"/>
</dbReference>
<dbReference type="GO" id="GO:0009252">
    <property type="term" value="P:peptidoglycan biosynthetic process"/>
    <property type="evidence" value="ECO:0007669"/>
    <property type="project" value="UniProtKB-UniRule"/>
</dbReference>
<dbReference type="GO" id="GO:0008360">
    <property type="term" value="P:regulation of cell shape"/>
    <property type="evidence" value="ECO:0007669"/>
    <property type="project" value="UniProtKB-KW"/>
</dbReference>
<dbReference type="FunFam" id="3.40.50.1860:FF:000001">
    <property type="entry name" value="Glutamate racemase"/>
    <property type="match status" value="1"/>
</dbReference>
<dbReference type="Gene3D" id="3.40.50.1860">
    <property type="match status" value="2"/>
</dbReference>
<dbReference type="HAMAP" id="MF_00258">
    <property type="entry name" value="Glu_racemase"/>
    <property type="match status" value="1"/>
</dbReference>
<dbReference type="InterPro" id="IPR015942">
    <property type="entry name" value="Asp/Glu/hydantoin_racemase"/>
</dbReference>
<dbReference type="InterPro" id="IPR001920">
    <property type="entry name" value="Asp/Glu_race"/>
</dbReference>
<dbReference type="InterPro" id="IPR018187">
    <property type="entry name" value="Asp/Glu_racemase_AS_1"/>
</dbReference>
<dbReference type="InterPro" id="IPR033134">
    <property type="entry name" value="Asp/Glu_racemase_AS_2"/>
</dbReference>
<dbReference type="InterPro" id="IPR004391">
    <property type="entry name" value="Glu_race"/>
</dbReference>
<dbReference type="NCBIfam" id="TIGR00067">
    <property type="entry name" value="glut_race"/>
    <property type="match status" value="1"/>
</dbReference>
<dbReference type="PANTHER" id="PTHR21198">
    <property type="entry name" value="GLUTAMATE RACEMASE"/>
    <property type="match status" value="1"/>
</dbReference>
<dbReference type="PANTHER" id="PTHR21198:SF2">
    <property type="entry name" value="GLUTAMATE RACEMASE"/>
    <property type="match status" value="1"/>
</dbReference>
<dbReference type="Pfam" id="PF01177">
    <property type="entry name" value="Asp_Glu_race"/>
    <property type="match status" value="1"/>
</dbReference>
<dbReference type="SUPFAM" id="SSF53681">
    <property type="entry name" value="Aspartate/glutamate racemase"/>
    <property type="match status" value="2"/>
</dbReference>
<dbReference type="PROSITE" id="PS00923">
    <property type="entry name" value="ASP_GLU_RACEMASE_1"/>
    <property type="match status" value="1"/>
</dbReference>
<dbReference type="PROSITE" id="PS00924">
    <property type="entry name" value="ASP_GLU_RACEMASE_2"/>
    <property type="match status" value="1"/>
</dbReference>
<organism>
    <name type="scientific">Shewanella piezotolerans (strain WP3 / JCM 13877)</name>
    <dbReference type="NCBI Taxonomy" id="225849"/>
    <lineage>
        <taxon>Bacteria</taxon>
        <taxon>Pseudomonadati</taxon>
        <taxon>Pseudomonadota</taxon>
        <taxon>Gammaproteobacteria</taxon>
        <taxon>Alteromonadales</taxon>
        <taxon>Shewanellaceae</taxon>
        <taxon>Shewanella</taxon>
    </lineage>
</organism>
<sequence length="268" mass="28790">MSGPILIFDSGIGGLSILDEIRKVMPQQSCCYLFDNARLPYGELEESELISGCVSLIIEQAMRINAGIVVVACNSASTLVLTTLREQLSIPVVGVVPAIKPAAKISKRRHIGLLATPGTIKRPYTKQLIDAFAEDCRVELFGSSELVMLAEAKLAGTAVDMQKLELLLAPIRTSELDTLVLGCTHFPVLATEIKQSLGQSIILLDSGKAVADRVLSLLKGNGLPKTASNKVVDYSAVFTTDDIAQGLKKRLVEEGFTSIEPHSSTNLR</sequence>
<feature type="chain" id="PRO_1000119191" description="Glutamate racemase">
    <location>
        <begin position="1"/>
        <end position="268"/>
    </location>
</feature>
<feature type="active site" description="Proton donor/acceptor" evidence="1">
    <location>
        <position position="73"/>
    </location>
</feature>
<feature type="active site" description="Proton donor/acceptor" evidence="1">
    <location>
        <position position="183"/>
    </location>
</feature>
<feature type="binding site" evidence="1">
    <location>
        <begin position="9"/>
        <end position="10"/>
    </location>
    <ligand>
        <name>substrate</name>
    </ligand>
</feature>
<feature type="binding site" evidence="1">
    <location>
        <begin position="41"/>
        <end position="42"/>
    </location>
    <ligand>
        <name>substrate</name>
    </ligand>
</feature>
<feature type="binding site" evidence="1">
    <location>
        <begin position="74"/>
        <end position="75"/>
    </location>
    <ligand>
        <name>substrate</name>
    </ligand>
</feature>
<feature type="binding site" evidence="1">
    <location>
        <begin position="184"/>
        <end position="185"/>
    </location>
    <ligand>
        <name>substrate</name>
    </ligand>
</feature>
<keyword id="KW-0133">Cell shape</keyword>
<keyword id="KW-0961">Cell wall biogenesis/degradation</keyword>
<keyword id="KW-0413">Isomerase</keyword>
<keyword id="KW-0573">Peptidoglycan synthesis</keyword>
<comment type="function">
    <text evidence="1">Provides the (R)-glutamate required for cell wall biosynthesis.</text>
</comment>
<comment type="catalytic activity">
    <reaction evidence="1">
        <text>L-glutamate = D-glutamate</text>
        <dbReference type="Rhea" id="RHEA:12813"/>
        <dbReference type="ChEBI" id="CHEBI:29985"/>
        <dbReference type="ChEBI" id="CHEBI:29986"/>
        <dbReference type="EC" id="5.1.1.3"/>
    </reaction>
</comment>
<comment type="pathway">
    <text evidence="1">Cell wall biogenesis; peptidoglycan biosynthesis.</text>
</comment>
<comment type="similarity">
    <text evidence="1">Belongs to the aspartate/glutamate racemases family.</text>
</comment>
<name>MURI_SHEPW</name>
<evidence type="ECO:0000255" key="1">
    <source>
        <dbReference type="HAMAP-Rule" id="MF_00258"/>
    </source>
</evidence>